<gene>
    <name type="ordered locus">RPC_0788</name>
</gene>
<comment type="similarity">
    <text evidence="1">Belongs to the UPF0301 (AlgH) family.</text>
</comment>
<organism>
    <name type="scientific">Rhodopseudomonas palustris (strain BisB18)</name>
    <dbReference type="NCBI Taxonomy" id="316056"/>
    <lineage>
        <taxon>Bacteria</taxon>
        <taxon>Pseudomonadati</taxon>
        <taxon>Pseudomonadota</taxon>
        <taxon>Alphaproteobacteria</taxon>
        <taxon>Hyphomicrobiales</taxon>
        <taxon>Nitrobacteraceae</taxon>
        <taxon>Rhodopseudomonas</taxon>
    </lineage>
</organism>
<dbReference type="EMBL" id="CP000301">
    <property type="protein sequence ID" value="ABD86359.1"/>
    <property type="molecule type" value="Genomic_DNA"/>
</dbReference>
<dbReference type="SMR" id="Q21B77"/>
<dbReference type="STRING" id="316056.RPC_0788"/>
<dbReference type="KEGG" id="rpc:RPC_0788"/>
<dbReference type="eggNOG" id="COG1678">
    <property type="taxonomic scope" value="Bacteria"/>
</dbReference>
<dbReference type="HOGENOM" id="CLU_057596_1_0_5"/>
<dbReference type="OrthoDB" id="9807486at2"/>
<dbReference type="GO" id="GO:0005829">
    <property type="term" value="C:cytosol"/>
    <property type="evidence" value="ECO:0007669"/>
    <property type="project" value="TreeGrafter"/>
</dbReference>
<dbReference type="Gene3D" id="3.40.1740.10">
    <property type="entry name" value="VC0467-like"/>
    <property type="match status" value="1"/>
</dbReference>
<dbReference type="HAMAP" id="MF_00758">
    <property type="entry name" value="UPF0301"/>
    <property type="match status" value="1"/>
</dbReference>
<dbReference type="InterPro" id="IPR003774">
    <property type="entry name" value="AlgH-like"/>
</dbReference>
<dbReference type="NCBIfam" id="NF001268">
    <property type="entry name" value="PRK00228.1-4"/>
    <property type="match status" value="1"/>
</dbReference>
<dbReference type="PANTHER" id="PTHR30327">
    <property type="entry name" value="UNCHARACTERIZED PROTEIN YQGE"/>
    <property type="match status" value="1"/>
</dbReference>
<dbReference type="PANTHER" id="PTHR30327:SF1">
    <property type="entry name" value="UPF0301 PROTEIN YQGE"/>
    <property type="match status" value="1"/>
</dbReference>
<dbReference type="Pfam" id="PF02622">
    <property type="entry name" value="DUF179"/>
    <property type="match status" value="1"/>
</dbReference>
<dbReference type="SUPFAM" id="SSF143456">
    <property type="entry name" value="VC0467-like"/>
    <property type="match status" value="1"/>
</dbReference>
<proteinExistence type="inferred from homology"/>
<accession>Q21B77</accession>
<reference key="1">
    <citation type="submission" date="2006-03" db="EMBL/GenBank/DDBJ databases">
        <title>Complete sequence of Rhodopseudomonas palustris BisB18.</title>
        <authorList>
            <consortium name="US DOE Joint Genome Institute"/>
            <person name="Copeland A."/>
            <person name="Lucas S."/>
            <person name="Lapidus A."/>
            <person name="Barry K."/>
            <person name="Detter J.C."/>
            <person name="Glavina del Rio T."/>
            <person name="Hammon N."/>
            <person name="Israni S."/>
            <person name="Dalin E."/>
            <person name="Tice H."/>
            <person name="Pitluck S."/>
            <person name="Chain P."/>
            <person name="Malfatti S."/>
            <person name="Shin M."/>
            <person name="Vergez L."/>
            <person name="Schmutz J."/>
            <person name="Larimer F."/>
            <person name="Land M."/>
            <person name="Hauser L."/>
            <person name="Pelletier D.A."/>
            <person name="Kyrpides N."/>
            <person name="Anderson I."/>
            <person name="Oda Y."/>
            <person name="Harwood C.S."/>
            <person name="Richardson P."/>
        </authorList>
    </citation>
    <scope>NUCLEOTIDE SEQUENCE [LARGE SCALE GENOMIC DNA]</scope>
    <source>
        <strain>BisB18</strain>
    </source>
</reference>
<sequence>MDPKSKAPKRDETKGADDASGRRYLDGQLLIAMPVMEDERFARSVIYVCAHSSEGAMGIIVNRPAGSIDFPELLVQLEIIDKADQIKLPENAETMKVLKGGPVETGRGFVLHSSDFFIKDATLPIDEGICLTATVDILRAIARGAGPKHAILALGYAGWAPGQLETEIQGNGWLHCPADADLIFGGDIEAKYSRALHKIGIEPGMLSNEAGHA</sequence>
<evidence type="ECO:0000255" key="1">
    <source>
        <dbReference type="HAMAP-Rule" id="MF_00758"/>
    </source>
</evidence>
<evidence type="ECO:0000256" key="2">
    <source>
        <dbReference type="SAM" id="MobiDB-lite"/>
    </source>
</evidence>
<feature type="chain" id="PRO_0000258870" description="UPF0301 protein RPC_0788">
    <location>
        <begin position="1"/>
        <end position="213"/>
    </location>
</feature>
<feature type="region of interest" description="Disordered" evidence="2">
    <location>
        <begin position="1"/>
        <end position="20"/>
    </location>
</feature>
<name>Y788_RHOPB</name>
<protein>
    <recommendedName>
        <fullName evidence="1">UPF0301 protein RPC_0788</fullName>
    </recommendedName>
</protein>